<sequence>MAKTIPRIGSRKNGRIGSRKNTRRIPKGVIHVQASFNNTIVTVTDVRGRVVSWSSAGTCGFKGTRRGTPFAAQTAAGNAIRTVVDQGMQRAEVMIKGPGLGRDAALRAIRRSGILLTFVRDVTPMPHNGCRPPKKRRV</sequence>
<evidence type="ECO:0000255" key="1">
    <source>
        <dbReference type="HAMAP-Rule" id="MF_01310"/>
    </source>
</evidence>
<evidence type="ECO:0000256" key="2">
    <source>
        <dbReference type="SAM" id="MobiDB-lite"/>
    </source>
</evidence>
<evidence type="ECO:0000305" key="3"/>
<name>RR11_DAUCA</name>
<proteinExistence type="inferred from homology"/>
<geneLocation type="chloroplast"/>
<feature type="chain" id="PRO_0000276645" description="Small ribosomal subunit protein uS11c">
    <location>
        <begin position="1"/>
        <end position="138"/>
    </location>
</feature>
<feature type="region of interest" description="Disordered" evidence="2">
    <location>
        <begin position="1"/>
        <end position="23"/>
    </location>
</feature>
<feature type="compositionally biased region" description="Basic residues" evidence="2">
    <location>
        <begin position="9"/>
        <end position="23"/>
    </location>
</feature>
<gene>
    <name evidence="1" type="primary">rps11</name>
</gene>
<reference key="1">
    <citation type="journal article" date="2006" name="BMC Genomics">
        <title>Complete plastid genome sequence of Daucus carota: implications for biotechnology and phylogeny of angiosperms.</title>
        <authorList>
            <person name="Ruhlman T."/>
            <person name="Lee S.-B."/>
            <person name="Jansen R.K."/>
            <person name="Hostetler J.B."/>
            <person name="Tallon L.J."/>
            <person name="Town C.D."/>
            <person name="Daniell H."/>
        </authorList>
    </citation>
    <scope>NUCLEOTIDE SEQUENCE [LARGE SCALE GENOMIC DNA]</scope>
    <source>
        <strain>cv. Danvers Half-long</strain>
    </source>
</reference>
<comment type="subunit">
    <text evidence="1">Part of the 30S ribosomal subunit.</text>
</comment>
<comment type="subcellular location">
    <subcellularLocation>
        <location>Plastid</location>
        <location>Chloroplast</location>
    </subcellularLocation>
</comment>
<comment type="similarity">
    <text evidence="1">Belongs to the universal ribosomal protein uS11 family.</text>
</comment>
<dbReference type="EMBL" id="DQ898156">
    <property type="protein sequence ID" value="ABI32456.1"/>
    <property type="molecule type" value="Genomic_DNA"/>
</dbReference>
<dbReference type="RefSeq" id="YP_740150.1">
    <property type="nucleotide sequence ID" value="NC_008325.1"/>
</dbReference>
<dbReference type="SMR" id="Q0G9S9"/>
<dbReference type="GeneID" id="4266777"/>
<dbReference type="OMA" id="TAVDQGM"/>
<dbReference type="GO" id="GO:0009507">
    <property type="term" value="C:chloroplast"/>
    <property type="evidence" value="ECO:0007669"/>
    <property type="project" value="UniProtKB-SubCell"/>
</dbReference>
<dbReference type="GO" id="GO:1990904">
    <property type="term" value="C:ribonucleoprotein complex"/>
    <property type="evidence" value="ECO:0007669"/>
    <property type="project" value="UniProtKB-KW"/>
</dbReference>
<dbReference type="GO" id="GO:0005840">
    <property type="term" value="C:ribosome"/>
    <property type="evidence" value="ECO:0007669"/>
    <property type="project" value="UniProtKB-KW"/>
</dbReference>
<dbReference type="GO" id="GO:0019843">
    <property type="term" value="F:rRNA binding"/>
    <property type="evidence" value="ECO:0007669"/>
    <property type="project" value="UniProtKB-UniRule"/>
</dbReference>
<dbReference type="GO" id="GO:0003735">
    <property type="term" value="F:structural constituent of ribosome"/>
    <property type="evidence" value="ECO:0007669"/>
    <property type="project" value="InterPro"/>
</dbReference>
<dbReference type="GO" id="GO:0006412">
    <property type="term" value="P:translation"/>
    <property type="evidence" value="ECO:0007669"/>
    <property type="project" value="UniProtKB-UniRule"/>
</dbReference>
<dbReference type="FunFam" id="3.30.420.80:FF:000003">
    <property type="entry name" value="30S ribosomal protein S11, chloroplastic"/>
    <property type="match status" value="1"/>
</dbReference>
<dbReference type="Gene3D" id="3.30.420.80">
    <property type="entry name" value="Ribosomal protein S11"/>
    <property type="match status" value="1"/>
</dbReference>
<dbReference type="HAMAP" id="MF_01310">
    <property type="entry name" value="Ribosomal_uS11"/>
    <property type="match status" value="1"/>
</dbReference>
<dbReference type="InterPro" id="IPR001971">
    <property type="entry name" value="Ribosomal_uS11"/>
</dbReference>
<dbReference type="InterPro" id="IPR019981">
    <property type="entry name" value="Ribosomal_uS11_bac-type"/>
</dbReference>
<dbReference type="InterPro" id="IPR018102">
    <property type="entry name" value="Ribosomal_uS11_CS"/>
</dbReference>
<dbReference type="InterPro" id="IPR036967">
    <property type="entry name" value="Ribosomal_uS11_sf"/>
</dbReference>
<dbReference type="NCBIfam" id="NF003698">
    <property type="entry name" value="PRK05309.1"/>
    <property type="match status" value="1"/>
</dbReference>
<dbReference type="NCBIfam" id="TIGR03632">
    <property type="entry name" value="uS11_bact"/>
    <property type="match status" value="1"/>
</dbReference>
<dbReference type="PANTHER" id="PTHR11759">
    <property type="entry name" value="40S RIBOSOMAL PROTEIN S14/30S RIBOSOMAL PROTEIN S11"/>
    <property type="match status" value="1"/>
</dbReference>
<dbReference type="Pfam" id="PF00411">
    <property type="entry name" value="Ribosomal_S11"/>
    <property type="match status" value="1"/>
</dbReference>
<dbReference type="PIRSF" id="PIRSF002131">
    <property type="entry name" value="Ribosomal_S11"/>
    <property type="match status" value="1"/>
</dbReference>
<dbReference type="SUPFAM" id="SSF53137">
    <property type="entry name" value="Translational machinery components"/>
    <property type="match status" value="1"/>
</dbReference>
<dbReference type="PROSITE" id="PS00054">
    <property type="entry name" value="RIBOSOMAL_S11"/>
    <property type="match status" value="1"/>
</dbReference>
<keyword id="KW-0150">Chloroplast</keyword>
<keyword id="KW-0934">Plastid</keyword>
<keyword id="KW-0687">Ribonucleoprotein</keyword>
<keyword id="KW-0689">Ribosomal protein</keyword>
<keyword id="KW-0694">RNA-binding</keyword>
<keyword id="KW-0699">rRNA-binding</keyword>
<accession>Q0G9S9</accession>
<organism>
    <name type="scientific">Daucus carota</name>
    <name type="common">Wild carrot</name>
    <dbReference type="NCBI Taxonomy" id="4039"/>
    <lineage>
        <taxon>Eukaryota</taxon>
        <taxon>Viridiplantae</taxon>
        <taxon>Streptophyta</taxon>
        <taxon>Embryophyta</taxon>
        <taxon>Tracheophyta</taxon>
        <taxon>Spermatophyta</taxon>
        <taxon>Magnoliopsida</taxon>
        <taxon>eudicotyledons</taxon>
        <taxon>Gunneridae</taxon>
        <taxon>Pentapetalae</taxon>
        <taxon>asterids</taxon>
        <taxon>campanulids</taxon>
        <taxon>Apiales</taxon>
        <taxon>Apiaceae</taxon>
        <taxon>Apioideae</taxon>
        <taxon>Scandiceae</taxon>
        <taxon>Daucinae</taxon>
        <taxon>Daucus</taxon>
        <taxon>Daucus sect. Daucus</taxon>
    </lineage>
</organism>
<protein>
    <recommendedName>
        <fullName evidence="1">Small ribosomal subunit protein uS11c</fullName>
    </recommendedName>
    <alternativeName>
        <fullName evidence="3">30S ribosomal protein S11, chloroplastic</fullName>
    </alternativeName>
</protein>